<evidence type="ECO:0000255" key="1">
    <source>
        <dbReference type="HAMAP-Rule" id="MF_00185"/>
    </source>
</evidence>
<proteinExistence type="inferred from homology"/>
<keyword id="KW-0067">ATP-binding</keyword>
<keyword id="KW-0460">Magnesium</keyword>
<keyword id="KW-0547">Nucleotide-binding</keyword>
<keyword id="KW-0808">Transferase</keyword>
<keyword id="KW-0819">tRNA processing</keyword>
<dbReference type="EC" id="2.5.1.75" evidence="1"/>
<dbReference type="EMBL" id="CP000260">
    <property type="protein sequence ID" value="ABF33846.1"/>
    <property type="molecule type" value="Genomic_DNA"/>
</dbReference>
<dbReference type="SMR" id="Q1JH90"/>
<dbReference type="KEGG" id="sph:MGAS10270_Spy0781"/>
<dbReference type="HOGENOM" id="CLU_032616_0_1_9"/>
<dbReference type="Proteomes" id="UP000002436">
    <property type="component" value="Chromosome"/>
</dbReference>
<dbReference type="GO" id="GO:0005524">
    <property type="term" value="F:ATP binding"/>
    <property type="evidence" value="ECO:0007669"/>
    <property type="project" value="UniProtKB-UniRule"/>
</dbReference>
<dbReference type="GO" id="GO:0052381">
    <property type="term" value="F:tRNA dimethylallyltransferase activity"/>
    <property type="evidence" value="ECO:0007669"/>
    <property type="project" value="UniProtKB-UniRule"/>
</dbReference>
<dbReference type="GO" id="GO:0006400">
    <property type="term" value="P:tRNA modification"/>
    <property type="evidence" value="ECO:0007669"/>
    <property type="project" value="TreeGrafter"/>
</dbReference>
<dbReference type="Gene3D" id="3.40.50.300">
    <property type="entry name" value="P-loop containing nucleotide triphosphate hydrolases"/>
    <property type="match status" value="1"/>
</dbReference>
<dbReference type="HAMAP" id="MF_00185">
    <property type="entry name" value="IPP_trans"/>
    <property type="match status" value="1"/>
</dbReference>
<dbReference type="InterPro" id="IPR039657">
    <property type="entry name" value="Dimethylallyltransferase"/>
</dbReference>
<dbReference type="InterPro" id="IPR018022">
    <property type="entry name" value="IPT"/>
</dbReference>
<dbReference type="InterPro" id="IPR027417">
    <property type="entry name" value="P-loop_NTPase"/>
</dbReference>
<dbReference type="NCBIfam" id="TIGR00174">
    <property type="entry name" value="miaA"/>
    <property type="match status" value="1"/>
</dbReference>
<dbReference type="PANTHER" id="PTHR11088">
    <property type="entry name" value="TRNA DIMETHYLALLYLTRANSFERASE"/>
    <property type="match status" value="1"/>
</dbReference>
<dbReference type="PANTHER" id="PTHR11088:SF60">
    <property type="entry name" value="TRNA DIMETHYLALLYLTRANSFERASE"/>
    <property type="match status" value="1"/>
</dbReference>
<dbReference type="Pfam" id="PF01715">
    <property type="entry name" value="IPPT"/>
    <property type="match status" value="1"/>
</dbReference>
<dbReference type="SUPFAM" id="SSF52540">
    <property type="entry name" value="P-loop containing nucleoside triphosphate hydrolases"/>
    <property type="match status" value="1"/>
</dbReference>
<feature type="chain" id="PRO_1000020670" description="tRNA dimethylallyltransferase">
    <location>
        <begin position="1"/>
        <end position="299"/>
    </location>
</feature>
<feature type="region of interest" description="Interaction with substrate tRNA" evidence="1">
    <location>
        <begin position="36"/>
        <end position="39"/>
    </location>
</feature>
<feature type="binding site" evidence="1">
    <location>
        <begin position="11"/>
        <end position="18"/>
    </location>
    <ligand>
        <name>ATP</name>
        <dbReference type="ChEBI" id="CHEBI:30616"/>
    </ligand>
</feature>
<feature type="binding site" evidence="1">
    <location>
        <begin position="13"/>
        <end position="18"/>
    </location>
    <ligand>
        <name>substrate</name>
    </ligand>
</feature>
<feature type="site" description="Interaction with substrate tRNA" evidence="1">
    <location>
        <position position="102"/>
    </location>
</feature>
<feature type="site" description="Interaction with substrate tRNA" evidence="1">
    <location>
        <position position="128"/>
    </location>
</feature>
<comment type="function">
    <text evidence="1">Catalyzes the transfer of a dimethylallyl group onto the adenine at position 37 in tRNAs that read codons beginning with uridine, leading to the formation of N6-(dimethylallyl)adenosine (i(6)A).</text>
</comment>
<comment type="catalytic activity">
    <reaction evidence="1">
        <text>adenosine(37) in tRNA + dimethylallyl diphosphate = N(6)-dimethylallyladenosine(37) in tRNA + diphosphate</text>
        <dbReference type="Rhea" id="RHEA:26482"/>
        <dbReference type="Rhea" id="RHEA-COMP:10162"/>
        <dbReference type="Rhea" id="RHEA-COMP:10375"/>
        <dbReference type="ChEBI" id="CHEBI:33019"/>
        <dbReference type="ChEBI" id="CHEBI:57623"/>
        <dbReference type="ChEBI" id="CHEBI:74411"/>
        <dbReference type="ChEBI" id="CHEBI:74415"/>
        <dbReference type="EC" id="2.5.1.75"/>
    </reaction>
</comment>
<comment type="cofactor">
    <cofactor evidence="1">
        <name>Mg(2+)</name>
        <dbReference type="ChEBI" id="CHEBI:18420"/>
    </cofactor>
</comment>
<comment type="subunit">
    <text evidence="1">Monomer.</text>
</comment>
<comment type="similarity">
    <text evidence="1">Belongs to the IPP transferase family.</text>
</comment>
<organism>
    <name type="scientific">Streptococcus pyogenes serotype M2 (strain MGAS10270)</name>
    <dbReference type="NCBI Taxonomy" id="370552"/>
    <lineage>
        <taxon>Bacteria</taxon>
        <taxon>Bacillati</taxon>
        <taxon>Bacillota</taxon>
        <taxon>Bacilli</taxon>
        <taxon>Lactobacillales</taxon>
        <taxon>Streptococcaceae</taxon>
        <taxon>Streptococcus</taxon>
    </lineage>
</organism>
<accession>Q1JH90</accession>
<sequence length="299" mass="34008">MTKIKIVVIVGPTAVGKTALGISLAKAFNGEIISGDSQQVYRQLDIGTAKATQEEQEAAVHHLIDIREVTESYSAYDFVQDAQKSISDIVSRGKLPIIVGGTGLYLQSLLEGYHLGGQVDQEAVKAYRNELEQLDDHDLYERLQVNNITIEQVNRRRAIRALELAQFADELENAETAYEPLIIGLNDDRQVIYDRINQRVNRMIENGLLEEAKWLYEHYPTVQASRGIGYKELFPYFVGEMTLAEASDQLKQNTRRFAKRQLTWFRNRMAVSFTAITAPDYPQVVHDRVRDFLGQKEKS</sequence>
<reference key="1">
    <citation type="journal article" date="2006" name="Proc. Natl. Acad. Sci. U.S.A.">
        <title>Molecular genetic anatomy of inter- and intraserotype variation in the human bacterial pathogen group A Streptococcus.</title>
        <authorList>
            <person name="Beres S.B."/>
            <person name="Richter E.W."/>
            <person name="Nagiec M.J."/>
            <person name="Sumby P."/>
            <person name="Porcella S.F."/>
            <person name="DeLeo F.R."/>
            <person name="Musser J.M."/>
        </authorList>
    </citation>
    <scope>NUCLEOTIDE SEQUENCE [LARGE SCALE GENOMIC DNA]</scope>
    <source>
        <strain>MGAS10270</strain>
    </source>
</reference>
<gene>
    <name evidence="1" type="primary">miaA</name>
    <name type="ordered locus">MGAS10270_Spy0781</name>
</gene>
<protein>
    <recommendedName>
        <fullName evidence="1">tRNA dimethylallyltransferase</fullName>
        <ecNumber evidence="1">2.5.1.75</ecNumber>
    </recommendedName>
    <alternativeName>
        <fullName evidence="1">Dimethylallyl diphosphate:tRNA dimethylallyltransferase</fullName>
        <shortName evidence="1">DMAPP:tRNA dimethylallyltransferase</shortName>
        <shortName evidence="1">DMATase</shortName>
    </alternativeName>
    <alternativeName>
        <fullName evidence="1">Isopentenyl-diphosphate:tRNA isopentenyltransferase</fullName>
        <shortName evidence="1">IPP transferase</shortName>
        <shortName evidence="1">IPPT</shortName>
        <shortName evidence="1">IPTase</shortName>
    </alternativeName>
</protein>
<name>MIAA_STRPD</name>